<keyword id="KW-0472">Membrane</keyword>
<keyword id="KW-0520">NAD</keyword>
<keyword id="KW-0521">NADP</keyword>
<keyword id="KW-0994">Organellar chromatophore</keyword>
<keyword id="KW-0934">Plastid</keyword>
<keyword id="KW-0618">Plastoquinone</keyword>
<keyword id="KW-0874">Quinone</keyword>
<keyword id="KW-0793">Thylakoid</keyword>
<keyword id="KW-1278">Translocase</keyword>
<keyword id="KW-0812">Transmembrane</keyword>
<keyword id="KW-1133">Transmembrane helix</keyword>
<keyword id="KW-0813">Transport</keyword>
<name>NU3C_PAUCH</name>
<accession>B1X4R1</accession>
<proteinExistence type="inferred from homology"/>
<sequence>MFVLSGYDAFLGFLLIATAVPVLALLTNKILAPKSRNGERELTYESGMEPVGGAWIQFNIRYYMFALVFVIFDVETVFLYPWAVAFHRLGLLAFIEALIFIAILVIALAYAWRKGALEWS</sequence>
<protein>
    <recommendedName>
        <fullName evidence="2">NAD(P)H-quinone oxidoreductase subunit 3, organellar chromatophore</fullName>
        <ecNumber evidence="2">7.1.1.-</ecNumber>
    </recommendedName>
    <alternativeName>
        <fullName evidence="2">NAD(P)H dehydrogenase subunit 3</fullName>
    </alternativeName>
    <alternativeName>
        <fullName evidence="2">NADH-plastoquinone oxidoreductase subunit 3</fullName>
    </alternativeName>
</protein>
<evidence type="ECO:0000250" key="1"/>
<evidence type="ECO:0000255" key="2">
    <source>
        <dbReference type="HAMAP-Rule" id="MF_01394"/>
    </source>
</evidence>
<gene>
    <name evidence="2" type="primary">ndhC</name>
    <name type="ordered locus">PCC_0494</name>
</gene>
<dbReference type="EC" id="7.1.1.-" evidence="2"/>
<dbReference type="EMBL" id="CP000815">
    <property type="protein sequence ID" value="ACB42930.1"/>
    <property type="molecule type" value="Genomic_DNA"/>
</dbReference>
<dbReference type="RefSeq" id="YP_002049140.1">
    <property type="nucleotide sequence ID" value="NC_011087.1"/>
</dbReference>
<dbReference type="SMR" id="B1X4R1"/>
<dbReference type="GeneID" id="6481478"/>
<dbReference type="GO" id="GO:0030964">
    <property type="term" value="C:NADH dehydrogenase complex"/>
    <property type="evidence" value="ECO:0007669"/>
    <property type="project" value="TreeGrafter"/>
</dbReference>
<dbReference type="GO" id="GO:0070118">
    <property type="term" value="C:organellar chromatophore thylakoid membrane"/>
    <property type="evidence" value="ECO:0007669"/>
    <property type="project" value="UniProtKB-SubCell"/>
</dbReference>
<dbReference type="GO" id="GO:0005886">
    <property type="term" value="C:plasma membrane"/>
    <property type="evidence" value="ECO:0007669"/>
    <property type="project" value="UniProtKB-UniRule"/>
</dbReference>
<dbReference type="GO" id="GO:0009536">
    <property type="term" value="C:plastid"/>
    <property type="evidence" value="ECO:0007669"/>
    <property type="project" value="UniProtKB-KW"/>
</dbReference>
<dbReference type="GO" id="GO:0008137">
    <property type="term" value="F:NADH dehydrogenase (ubiquinone) activity"/>
    <property type="evidence" value="ECO:0007669"/>
    <property type="project" value="InterPro"/>
</dbReference>
<dbReference type="GO" id="GO:0050136">
    <property type="term" value="F:NADH:ubiquinone reductase (non-electrogenic) activity"/>
    <property type="evidence" value="ECO:0007669"/>
    <property type="project" value="UniProtKB-UniRule"/>
</dbReference>
<dbReference type="GO" id="GO:0048038">
    <property type="term" value="F:quinone binding"/>
    <property type="evidence" value="ECO:0007669"/>
    <property type="project" value="UniProtKB-KW"/>
</dbReference>
<dbReference type="Gene3D" id="1.20.58.1610">
    <property type="entry name" value="NADH:ubiquinone/plastoquinone oxidoreductase, chain 3"/>
    <property type="match status" value="1"/>
</dbReference>
<dbReference type="HAMAP" id="MF_01394">
    <property type="entry name" value="NDH1_NuoA"/>
    <property type="match status" value="1"/>
</dbReference>
<dbReference type="InterPro" id="IPR023043">
    <property type="entry name" value="NAD(P)H_OxRDtase_bac/plastid"/>
</dbReference>
<dbReference type="InterPro" id="IPR000440">
    <property type="entry name" value="NADH_UbQ/plastoQ_OxRdtase_su3"/>
</dbReference>
<dbReference type="InterPro" id="IPR038430">
    <property type="entry name" value="NDAH_ubi_oxred_su3_sf"/>
</dbReference>
<dbReference type="PANTHER" id="PTHR11058">
    <property type="entry name" value="NADH-UBIQUINONE OXIDOREDUCTASE CHAIN 3"/>
    <property type="match status" value="1"/>
</dbReference>
<dbReference type="PANTHER" id="PTHR11058:SF9">
    <property type="entry name" value="NADH-UBIQUINONE OXIDOREDUCTASE CHAIN 3"/>
    <property type="match status" value="1"/>
</dbReference>
<dbReference type="Pfam" id="PF00507">
    <property type="entry name" value="Oxidored_q4"/>
    <property type="match status" value="1"/>
</dbReference>
<geneLocation type="organellar chromatophore"/>
<feature type="chain" id="PRO_0000362878" description="NAD(P)H-quinone oxidoreductase subunit 3, organellar chromatophore">
    <location>
        <begin position="1"/>
        <end position="120"/>
    </location>
</feature>
<feature type="transmembrane region" description="Helical" evidence="2">
    <location>
        <begin position="6"/>
        <end position="26"/>
    </location>
</feature>
<feature type="transmembrane region" description="Helical" evidence="2">
    <location>
        <begin position="64"/>
        <end position="84"/>
    </location>
</feature>
<feature type="transmembrane region" description="Helical" evidence="2">
    <location>
        <begin position="89"/>
        <end position="109"/>
    </location>
</feature>
<comment type="function">
    <text evidence="2">NDH shuttles electrons from NAD(P)H:plastoquinone, via FMN and iron-sulfur (Fe-S) centers, to quinones in the photosynthetic chain and possibly in a chloroplast respiratory chain. The immediate electron acceptor for the enzyme in this species is believed to be plastoquinone. Couples the redox reaction to proton translocation, and thus conserves the redox energy in a proton gradient.</text>
</comment>
<comment type="catalytic activity">
    <reaction evidence="2">
        <text>a plastoquinone + NADH + (n+1) H(+)(in) = a plastoquinol + NAD(+) + n H(+)(out)</text>
        <dbReference type="Rhea" id="RHEA:42608"/>
        <dbReference type="Rhea" id="RHEA-COMP:9561"/>
        <dbReference type="Rhea" id="RHEA-COMP:9562"/>
        <dbReference type="ChEBI" id="CHEBI:15378"/>
        <dbReference type="ChEBI" id="CHEBI:17757"/>
        <dbReference type="ChEBI" id="CHEBI:57540"/>
        <dbReference type="ChEBI" id="CHEBI:57945"/>
        <dbReference type="ChEBI" id="CHEBI:62192"/>
    </reaction>
</comment>
<comment type="catalytic activity">
    <reaction evidence="2">
        <text>a plastoquinone + NADPH + (n+1) H(+)(in) = a plastoquinol + NADP(+) + n H(+)(out)</text>
        <dbReference type="Rhea" id="RHEA:42612"/>
        <dbReference type="Rhea" id="RHEA-COMP:9561"/>
        <dbReference type="Rhea" id="RHEA-COMP:9562"/>
        <dbReference type="ChEBI" id="CHEBI:15378"/>
        <dbReference type="ChEBI" id="CHEBI:17757"/>
        <dbReference type="ChEBI" id="CHEBI:57783"/>
        <dbReference type="ChEBI" id="CHEBI:58349"/>
        <dbReference type="ChEBI" id="CHEBI:62192"/>
    </reaction>
</comment>
<comment type="subunit">
    <text evidence="2">NDH is composed of at least 16 different subunits, 5 of which are encoded in the nucleus.</text>
</comment>
<comment type="subcellular location">
    <subcellularLocation>
        <location evidence="1">Plastid</location>
        <location evidence="1">Organellar chromatophore thylakoid membrane</location>
        <topology evidence="2">Multi-pass membrane protein</topology>
    </subcellularLocation>
</comment>
<comment type="similarity">
    <text evidence="2">Belongs to the complex I subunit 3 family.</text>
</comment>
<reference key="1">
    <citation type="journal article" date="2008" name="Curr. Biol.">
        <title>Chromatophore genome sequence of Paulinella sheds light on acquisition of photosynthesis by eukaryotes.</title>
        <authorList>
            <person name="Nowack E.C.M."/>
            <person name="Melkonian M."/>
            <person name="Gloeckner G."/>
        </authorList>
    </citation>
    <scope>NUCLEOTIDE SEQUENCE [LARGE SCALE GENOMIC DNA]</scope>
</reference>
<organism>
    <name type="scientific">Paulinella chromatophora</name>
    <dbReference type="NCBI Taxonomy" id="39717"/>
    <lineage>
        <taxon>Eukaryota</taxon>
        <taxon>Sar</taxon>
        <taxon>Rhizaria</taxon>
        <taxon>Cercozoa</taxon>
        <taxon>Imbricatea</taxon>
        <taxon>Silicofilosea</taxon>
        <taxon>Euglyphida</taxon>
        <taxon>Paulinellidae</taxon>
        <taxon>Paulinella</taxon>
    </lineage>
</organism>